<sequence length="333" mass="36360">MIDTTLPLTDIHRHLDGNIRPQTILELGRQYNISLPAQSLETLIPHVQVIANEPDLVSFLTKLDWGVKVLASLDACRRVAFENIEDAARNGLHYVELRFSPGYMAMAHQLPVAGVVEAVIDGVREGCRTFGVQAKLIGIMSRTFGEAACQQELEAFLAHRDQITALDLAGDELGFPGSLFLSHFNRARDAGWHITVHAGEAAGPESIWQAIRELGAERIGHGVKAIEDRALMDFLAEQQIGIESCLTSNIQTSTVADLAAHPLKTFLEHGIRASINTDDPGVQGVDIIHEYTVAAPAAGLSREQIRQAQINGLEMAFLSAEEKRALREKVAAK</sequence>
<name>ADD_ECOL5</name>
<evidence type="ECO:0000255" key="1">
    <source>
        <dbReference type="HAMAP-Rule" id="MF_00540"/>
    </source>
</evidence>
<feature type="chain" id="PRO_1000017660" description="Adenosine deaminase">
    <location>
        <begin position="1"/>
        <end position="333"/>
    </location>
</feature>
<feature type="active site" description="Proton donor" evidence="1">
    <location>
        <position position="200"/>
    </location>
</feature>
<feature type="binding site" evidence="1">
    <location>
        <position position="12"/>
    </location>
    <ligand>
        <name>Zn(2+)</name>
        <dbReference type="ChEBI" id="CHEBI:29105"/>
        <note>catalytic</note>
    </ligand>
</feature>
<feature type="binding site" evidence="1">
    <location>
        <position position="14"/>
    </location>
    <ligand>
        <name>substrate</name>
    </ligand>
</feature>
<feature type="binding site" evidence="1">
    <location>
        <position position="14"/>
    </location>
    <ligand>
        <name>Zn(2+)</name>
        <dbReference type="ChEBI" id="CHEBI:29105"/>
        <note>catalytic</note>
    </ligand>
</feature>
<feature type="binding site" evidence="1">
    <location>
        <position position="16"/>
    </location>
    <ligand>
        <name>substrate</name>
    </ligand>
</feature>
<feature type="binding site" evidence="1">
    <location>
        <position position="170"/>
    </location>
    <ligand>
        <name>substrate</name>
    </ligand>
</feature>
<feature type="binding site" evidence="1">
    <location>
        <position position="197"/>
    </location>
    <ligand>
        <name>Zn(2+)</name>
        <dbReference type="ChEBI" id="CHEBI:29105"/>
        <note>catalytic</note>
    </ligand>
</feature>
<feature type="binding site" evidence="1">
    <location>
        <position position="278"/>
    </location>
    <ligand>
        <name>Zn(2+)</name>
        <dbReference type="ChEBI" id="CHEBI:29105"/>
        <note>catalytic</note>
    </ligand>
</feature>
<feature type="binding site" evidence="1">
    <location>
        <position position="279"/>
    </location>
    <ligand>
        <name>substrate</name>
    </ligand>
</feature>
<feature type="site" description="Important for catalytic activity" evidence="1">
    <location>
        <position position="221"/>
    </location>
</feature>
<gene>
    <name evidence="1" type="primary">add</name>
    <name type="ordered locus">ECP_1567</name>
</gene>
<dbReference type="EC" id="3.5.4.4" evidence="1"/>
<dbReference type="EMBL" id="CP000247">
    <property type="protein sequence ID" value="ABG69574.1"/>
    <property type="molecule type" value="Genomic_DNA"/>
</dbReference>
<dbReference type="RefSeq" id="WP_000567511.1">
    <property type="nucleotide sequence ID" value="NC_008253.1"/>
</dbReference>
<dbReference type="SMR" id="Q0THK5"/>
<dbReference type="KEGG" id="ecp:ECP_1567"/>
<dbReference type="HOGENOM" id="CLU_039228_0_2_6"/>
<dbReference type="Proteomes" id="UP000009182">
    <property type="component" value="Chromosome"/>
</dbReference>
<dbReference type="GO" id="GO:0005829">
    <property type="term" value="C:cytosol"/>
    <property type="evidence" value="ECO:0007669"/>
    <property type="project" value="TreeGrafter"/>
</dbReference>
<dbReference type="GO" id="GO:0046936">
    <property type="term" value="F:2'-deoxyadenosine deaminase activity"/>
    <property type="evidence" value="ECO:0007669"/>
    <property type="project" value="RHEA"/>
</dbReference>
<dbReference type="GO" id="GO:0004000">
    <property type="term" value="F:adenosine deaminase activity"/>
    <property type="evidence" value="ECO:0007669"/>
    <property type="project" value="UniProtKB-UniRule"/>
</dbReference>
<dbReference type="GO" id="GO:0008270">
    <property type="term" value="F:zinc ion binding"/>
    <property type="evidence" value="ECO:0007669"/>
    <property type="project" value="UniProtKB-UniRule"/>
</dbReference>
<dbReference type="GO" id="GO:0006154">
    <property type="term" value="P:adenosine catabolic process"/>
    <property type="evidence" value="ECO:0007669"/>
    <property type="project" value="TreeGrafter"/>
</dbReference>
<dbReference type="GO" id="GO:0043103">
    <property type="term" value="P:hypoxanthine salvage"/>
    <property type="evidence" value="ECO:0007669"/>
    <property type="project" value="TreeGrafter"/>
</dbReference>
<dbReference type="GO" id="GO:0046103">
    <property type="term" value="P:inosine biosynthetic process"/>
    <property type="evidence" value="ECO:0007669"/>
    <property type="project" value="TreeGrafter"/>
</dbReference>
<dbReference type="GO" id="GO:0009117">
    <property type="term" value="P:nucleotide metabolic process"/>
    <property type="evidence" value="ECO:0007669"/>
    <property type="project" value="UniProtKB-KW"/>
</dbReference>
<dbReference type="GO" id="GO:0009168">
    <property type="term" value="P:purine ribonucleoside monophosphate biosynthetic process"/>
    <property type="evidence" value="ECO:0007669"/>
    <property type="project" value="UniProtKB-UniRule"/>
</dbReference>
<dbReference type="CDD" id="cd01320">
    <property type="entry name" value="ADA"/>
    <property type="match status" value="1"/>
</dbReference>
<dbReference type="FunFam" id="3.20.20.140:FF:000009">
    <property type="entry name" value="Adenosine deaminase"/>
    <property type="match status" value="1"/>
</dbReference>
<dbReference type="Gene3D" id="3.20.20.140">
    <property type="entry name" value="Metal-dependent hydrolases"/>
    <property type="match status" value="1"/>
</dbReference>
<dbReference type="HAMAP" id="MF_00540">
    <property type="entry name" value="A_deaminase"/>
    <property type="match status" value="1"/>
</dbReference>
<dbReference type="InterPro" id="IPR006650">
    <property type="entry name" value="A/AMP_deam_AS"/>
</dbReference>
<dbReference type="InterPro" id="IPR028893">
    <property type="entry name" value="A_deaminase"/>
</dbReference>
<dbReference type="InterPro" id="IPR001365">
    <property type="entry name" value="A_deaminase_dom"/>
</dbReference>
<dbReference type="InterPro" id="IPR006330">
    <property type="entry name" value="Ado/ade_deaminase"/>
</dbReference>
<dbReference type="InterPro" id="IPR032466">
    <property type="entry name" value="Metal_Hydrolase"/>
</dbReference>
<dbReference type="NCBIfam" id="TIGR01430">
    <property type="entry name" value="aden_deam"/>
    <property type="match status" value="1"/>
</dbReference>
<dbReference type="NCBIfam" id="NF006846">
    <property type="entry name" value="PRK09358.1-1"/>
    <property type="match status" value="1"/>
</dbReference>
<dbReference type="PANTHER" id="PTHR11409">
    <property type="entry name" value="ADENOSINE DEAMINASE"/>
    <property type="match status" value="1"/>
</dbReference>
<dbReference type="PANTHER" id="PTHR11409:SF43">
    <property type="entry name" value="ADENOSINE DEAMINASE"/>
    <property type="match status" value="1"/>
</dbReference>
<dbReference type="Pfam" id="PF00962">
    <property type="entry name" value="A_deaminase"/>
    <property type="match status" value="1"/>
</dbReference>
<dbReference type="SUPFAM" id="SSF51556">
    <property type="entry name" value="Metallo-dependent hydrolases"/>
    <property type="match status" value="1"/>
</dbReference>
<dbReference type="PROSITE" id="PS00485">
    <property type="entry name" value="A_DEAMINASE"/>
    <property type="match status" value="1"/>
</dbReference>
<proteinExistence type="inferred from homology"/>
<accession>Q0THK5</accession>
<keyword id="KW-0378">Hydrolase</keyword>
<keyword id="KW-0479">Metal-binding</keyword>
<keyword id="KW-0546">Nucleotide metabolism</keyword>
<keyword id="KW-0862">Zinc</keyword>
<protein>
    <recommendedName>
        <fullName evidence="1">Adenosine deaminase</fullName>
        <ecNumber evidence="1">3.5.4.4</ecNumber>
    </recommendedName>
    <alternativeName>
        <fullName evidence="1">Adenosine aminohydrolase</fullName>
    </alternativeName>
</protein>
<organism>
    <name type="scientific">Escherichia coli O6:K15:H31 (strain 536 / UPEC)</name>
    <dbReference type="NCBI Taxonomy" id="362663"/>
    <lineage>
        <taxon>Bacteria</taxon>
        <taxon>Pseudomonadati</taxon>
        <taxon>Pseudomonadota</taxon>
        <taxon>Gammaproteobacteria</taxon>
        <taxon>Enterobacterales</taxon>
        <taxon>Enterobacteriaceae</taxon>
        <taxon>Escherichia</taxon>
    </lineage>
</organism>
<comment type="function">
    <text evidence="1">Catalyzes the hydrolytic deamination of adenosine and 2-deoxyadenosine.</text>
</comment>
<comment type="catalytic activity">
    <reaction evidence="1">
        <text>adenosine + H2O + H(+) = inosine + NH4(+)</text>
        <dbReference type="Rhea" id="RHEA:24408"/>
        <dbReference type="ChEBI" id="CHEBI:15377"/>
        <dbReference type="ChEBI" id="CHEBI:15378"/>
        <dbReference type="ChEBI" id="CHEBI:16335"/>
        <dbReference type="ChEBI" id="CHEBI:17596"/>
        <dbReference type="ChEBI" id="CHEBI:28938"/>
        <dbReference type="EC" id="3.5.4.4"/>
    </reaction>
    <physiologicalReaction direction="left-to-right" evidence="1">
        <dbReference type="Rhea" id="RHEA:24409"/>
    </physiologicalReaction>
</comment>
<comment type="catalytic activity">
    <reaction evidence="1">
        <text>2'-deoxyadenosine + H2O + H(+) = 2'-deoxyinosine + NH4(+)</text>
        <dbReference type="Rhea" id="RHEA:28190"/>
        <dbReference type="ChEBI" id="CHEBI:15377"/>
        <dbReference type="ChEBI" id="CHEBI:15378"/>
        <dbReference type="ChEBI" id="CHEBI:17256"/>
        <dbReference type="ChEBI" id="CHEBI:28938"/>
        <dbReference type="ChEBI" id="CHEBI:28997"/>
        <dbReference type="EC" id="3.5.4.4"/>
    </reaction>
    <physiologicalReaction direction="left-to-right" evidence="1">
        <dbReference type="Rhea" id="RHEA:28191"/>
    </physiologicalReaction>
</comment>
<comment type="cofactor">
    <cofactor evidence="1">
        <name>Zn(2+)</name>
        <dbReference type="ChEBI" id="CHEBI:29105"/>
    </cofactor>
    <text evidence="1">Binds 1 zinc ion per subunit.</text>
</comment>
<comment type="similarity">
    <text evidence="1">Belongs to the metallo-dependent hydrolases superfamily. Adenosine and AMP deaminases family. Adenosine deaminase subfamily.</text>
</comment>
<reference key="1">
    <citation type="journal article" date="2006" name="Mol. Microbiol.">
        <title>Role of pathogenicity island-associated integrases in the genome plasticity of uropathogenic Escherichia coli strain 536.</title>
        <authorList>
            <person name="Hochhut B."/>
            <person name="Wilde C."/>
            <person name="Balling G."/>
            <person name="Middendorf B."/>
            <person name="Dobrindt U."/>
            <person name="Brzuszkiewicz E."/>
            <person name="Gottschalk G."/>
            <person name="Carniel E."/>
            <person name="Hacker J."/>
        </authorList>
    </citation>
    <scope>NUCLEOTIDE SEQUENCE [LARGE SCALE GENOMIC DNA]</scope>
    <source>
        <strain>536 / UPEC</strain>
    </source>
</reference>